<accession>P20285</accession>
<accession>Q7RVH2</accession>
<reference key="1">
    <citation type="journal article" date="1989" name="J. Biol. Chem.">
        <title>A mitochondrial protein from Neurospora crassa detected both on ribosomes and in membrane fractions. Analysis of the gene, the message, and the protein.</title>
        <authorList>
            <person name="Kreader C.A."/>
            <person name="Langer C.S."/>
            <person name="Heckman J.E."/>
        </authorList>
    </citation>
    <scope>NUCLEOTIDE SEQUENCE [GENOMIC DNA]</scope>
    <scope>PROTEIN SEQUENCE OF 29-50</scope>
</reference>
<reference key="2">
    <citation type="journal article" date="2003" name="Nature">
        <title>The genome sequence of the filamentous fungus Neurospora crassa.</title>
        <authorList>
            <person name="Galagan J.E."/>
            <person name="Calvo S.E."/>
            <person name="Borkovich K.A."/>
            <person name="Selker E.U."/>
            <person name="Read N.D."/>
            <person name="Jaffe D.B."/>
            <person name="FitzHugh W."/>
            <person name="Ma L.-J."/>
            <person name="Smirnov S."/>
            <person name="Purcell S."/>
            <person name="Rehman B."/>
            <person name="Elkins T."/>
            <person name="Engels R."/>
            <person name="Wang S."/>
            <person name="Nielsen C.B."/>
            <person name="Butler J."/>
            <person name="Endrizzi M."/>
            <person name="Qui D."/>
            <person name="Ianakiev P."/>
            <person name="Bell-Pedersen D."/>
            <person name="Nelson M.A."/>
            <person name="Werner-Washburne M."/>
            <person name="Selitrennikoff C.P."/>
            <person name="Kinsey J.A."/>
            <person name="Braun E.L."/>
            <person name="Zelter A."/>
            <person name="Schulte U."/>
            <person name="Kothe G.O."/>
            <person name="Jedd G."/>
            <person name="Mewes H.-W."/>
            <person name="Staben C."/>
            <person name="Marcotte E."/>
            <person name="Greenberg D."/>
            <person name="Roy A."/>
            <person name="Foley K."/>
            <person name="Naylor J."/>
            <person name="Stange-Thomann N."/>
            <person name="Barrett R."/>
            <person name="Gnerre S."/>
            <person name="Kamal M."/>
            <person name="Kamvysselis M."/>
            <person name="Mauceli E.W."/>
            <person name="Bielke C."/>
            <person name="Rudd S."/>
            <person name="Frishman D."/>
            <person name="Krystofova S."/>
            <person name="Rasmussen C."/>
            <person name="Metzenberg R.L."/>
            <person name="Perkins D.D."/>
            <person name="Kroken S."/>
            <person name="Cogoni C."/>
            <person name="Macino G."/>
            <person name="Catcheside D.E.A."/>
            <person name="Li W."/>
            <person name="Pratt R.J."/>
            <person name="Osmani S.A."/>
            <person name="DeSouza C.P.C."/>
            <person name="Glass N.L."/>
            <person name="Orbach M.J."/>
            <person name="Berglund J.A."/>
            <person name="Voelker R."/>
            <person name="Yarden O."/>
            <person name="Plamann M."/>
            <person name="Seiler S."/>
            <person name="Dunlap J.C."/>
            <person name="Radford A."/>
            <person name="Aramayo R."/>
            <person name="Natvig D.O."/>
            <person name="Alex L.A."/>
            <person name="Mannhaupt G."/>
            <person name="Ebbole D.J."/>
            <person name="Freitag M."/>
            <person name="Paulsen I."/>
            <person name="Sachs M.S."/>
            <person name="Lander E.S."/>
            <person name="Nusbaum C."/>
            <person name="Birren B.W."/>
        </authorList>
    </citation>
    <scope>NUCLEOTIDE SEQUENCE [LARGE SCALE GENOMIC DNA]</scope>
    <source>
        <strain>ATCC 24698 / 74-OR23-1A / CBS 708.71 / DSM 1257 / FGSC 987</strain>
    </source>
</reference>
<reference key="3">
    <citation type="journal article" date="1991" name="Biochim. Biophys. Acta">
        <title>Sequence similarities within the family of dihydrolipoamide acyltransferases and discovery of a previously unidentified fungal enzyme.</title>
        <authorList>
            <person name="Russel G.C."/>
            <person name="Guest J.R."/>
        </authorList>
    </citation>
    <scope>PROBABLE FUNCTION</scope>
</reference>
<feature type="transit peptide" description="Mitochondrion" evidence="6">
    <location>
        <begin position="1"/>
        <end position="28"/>
    </location>
</feature>
<feature type="chain" id="PRO_0000020481" description="Dihydrolipoyllysine-residue acetyltransferase component of pyruvate dehydrogenase complex, mitochondrial">
    <location>
        <begin position="29"/>
        <end position="458"/>
    </location>
</feature>
<feature type="domain" description="Lipoyl-binding" evidence="3">
    <location>
        <begin position="34"/>
        <end position="110"/>
    </location>
</feature>
<feature type="domain" description="Peripheral subunit-binding (PSBD)" evidence="4">
    <location>
        <begin position="177"/>
        <end position="214"/>
    </location>
</feature>
<feature type="region of interest" description="Disordered" evidence="5">
    <location>
        <begin position="126"/>
        <end position="164"/>
    </location>
</feature>
<feature type="active site" evidence="2">
    <location>
        <position position="431"/>
    </location>
</feature>
<feature type="active site" evidence="2">
    <location>
        <position position="435"/>
    </location>
</feature>
<feature type="modified residue" description="N6-lipoyllysine" evidence="1 3">
    <location>
        <position position="75"/>
    </location>
</feature>
<feature type="strand" evidence="9">
    <location>
        <begin position="228"/>
        <end position="231"/>
    </location>
</feature>
<feature type="helix" evidence="9">
    <location>
        <begin position="234"/>
        <end position="249"/>
    </location>
</feature>
<feature type="strand" evidence="9">
    <location>
        <begin position="252"/>
        <end position="260"/>
    </location>
</feature>
<feature type="helix" evidence="9">
    <location>
        <begin position="262"/>
        <end position="271"/>
    </location>
</feature>
<feature type="strand" evidence="9">
    <location>
        <begin position="276"/>
        <end position="278"/>
    </location>
</feature>
<feature type="helix" evidence="9">
    <location>
        <begin position="283"/>
        <end position="297"/>
    </location>
</feature>
<feature type="helix" evidence="9">
    <location>
        <begin position="299"/>
        <end position="301"/>
    </location>
</feature>
<feature type="strand" evidence="9">
    <location>
        <begin position="302"/>
        <end position="305"/>
    </location>
</feature>
<feature type="strand" evidence="9">
    <location>
        <begin position="307"/>
        <end position="312"/>
    </location>
</feature>
<feature type="strand" evidence="9">
    <location>
        <begin position="318"/>
        <end position="320"/>
    </location>
</feature>
<feature type="helix" evidence="9">
    <location>
        <begin position="341"/>
        <end position="357"/>
    </location>
</feature>
<feature type="helix" evidence="9">
    <location>
        <begin position="362"/>
        <end position="365"/>
    </location>
</feature>
<feature type="strand" evidence="9">
    <location>
        <begin position="369"/>
        <end position="374"/>
    </location>
</feature>
<feature type="strand" evidence="9">
    <location>
        <begin position="393"/>
        <end position="398"/>
    </location>
</feature>
<feature type="strand" evidence="9">
    <location>
        <begin position="402"/>
        <end position="410"/>
    </location>
</feature>
<feature type="turn" evidence="9">
    <location>
        <begin position="411"/>
        <end position="413"/>
    </location>
</feature>
<feature type="strand" evidence="9">
    <location>
        <begin position="414"/>
        <end position="430"/>
    </location>
</feature>
<feature type="turn" evidence="9">
    <location>
        <begin position="431"/>
        <end position="433"/>
    </location>
</feature>
<feature type="helix" evidence="9">
    <location>
        <begin position="436"/>
        <end position="451"/>
    </location>
</feature>
<feature type="helix" evidence="9">
    <location>
        <begin position="454"/>
        <end position="456"/>
    </location>
</feature>
<keyword id="KW-0002">3D-structure</keyword>
<keyword id="KW-0012">Acyltransferase</keyword>
<keyword id="KW-0903">Direct protein sequencing</keyword>
<keyword id="KW-0450">Lipoyl</keyword>
<keyword id="KW-0496">Mitochondrion</keyword>
<keyword id="KW-1185">Reference proteome</keyword>
<keyword id="KW-0808">Transferase</keyword>
<keyword id="KW-0809">Transit peptide</keyword>
<name>ODP2_NEUCR</name>
<gene>
    <name type="primary">mrp-3</name>
    <name type="ORF">NCU07659</name>
</gene>
<protein>
    <recommendedName>
        <fullName>Dihydrolipoyllysine-residue acetyltransferase component of pyruvate dehydrogenase complex, mitochondrial</fullName>
        <ecNumber>2.3.1.12</ecNumber>
    </recommendedName>
    <alternativeName>
        <fullName>Dihydrolipoamide acetyltransferase component of pyruvate dehydrogenase complex</fullName>
    </alternativeName>
    <alternativeName>
        <fullName>MRP3</fullName>
    </alternativeName>
    <alternativeName>
        <fullName>Pyruvate dehydrogenase complex component E2</fullName>
        <shortName>PDC-E2</shortName>
        <shortName>PDCE2</shortName>
    </alternativeName>
</protein>
<comment type="function">
    <text>The pyruvate dehydrogenase complex catalyzes the overall conversion of pyruvate to acetyl-CoA and CO(2). It contains multiple copies of three enzymatic components: pyruvate dehydrogenase (E1), dihydrolipoamide acetyltransferase (E2) and lipoamide dehydrogenase (E3).</text>
</comment>
<comment type="catalytic activity">
    <reaction>
        <text>N(6)-[(R)-dihydrolipoyl]-L-lysyl-[protein] + acetyl-CoA = N(6)-[(R)-S(8)-acetyldihydrolipoyl]-L-lysyl-[protein] + CoA</text>
        <dbReference type="Rhea" id="RHEA:17017"/>
        <dbReference type="Rhea" id="RHEA-COMP:10475"/>
        <dbReference type="Rhea" id="RHEA-COMP:10478"/>
        <dbReference type="ChEBI" id="CHEBI:57287"/>
        <dbReference type="ChEBI" id="CHEBI:57288"/>
        <dbReference type="ChEBI" id="CHEBI:83100"/>
        <dbReference type="ChEBI" id="CHEBI:83111"/>
        <dbReference type="EC" id="2.3.1.12"/>
    </reaction>
</comment>
<comment type="cofactor">
    <cofactor evidence="1">
        <name>(R)-lipoate</name>
        <dbReference type="ChEBI" id="CHEBI:83088"/>
    </cofactor>
    <text evidence="1">Binds 1 lipoyl cofactor covalently.</text>
</comment>
<comment type="subcellular location">
    <subcellularLocation>
        <location>Mitochondrion matrix</location>
    </subcellularLocation>
</comment>
<comment type="miscellaneous">
    <text>The E2 component contains covalently-bound lipoyl cofactors and it participates in the generation of acetyl groups from hydroxyethyl-thiamine pyrophosphate-E1 and their transfer to coenzyme A.</text>
</comment>
<comment type="similarity">
    <text evidence="7">Belongs to the 2-oxoacid dehydrogenase family.</text>
</comment>
<comment type="caution">
    <text evidence="8">Was originally thought to be a ribosomal protein.</text>
</comment>
<organism>
    <name type="scientific">Neurospora crassa (strain ATCC 24698 / 74-OR23-1A / CBS 708.71 / DSM 1257 / FGSC 987)</name>
    <dbReference type="NCBI Taxonomy" id="367110"/>
    <lineage>
        <taxon>Eukaryota</taxon>
        <taxon>Fungi</taxon>
        <taxon>Dikarya</taxon>
        <taxon>Ascomycota</taxon>
        <taxon>Pezizomycotina</taxon>
        <taxon>Sordariomycetes</taxon>
        <taxon>Sordariomycetidae</taxon>
        <taxon>Sordariales</taxon>
        <taxon>Sordariaceae</taxon>
        <taxon>Neurospora</taxon>
    </lineage>
</organism>
<proteinExistence type="evidence at protein level"/>
<dbReference type="EC" id="2.3.1.12"/>
<dbReference type="EMBL" id="J04432">
    <property type="protein sequence ID" value="AAA60452.1"/>
    <property type="molecule type" value="Genomic_DNA"/>
</dbReference>
<dbReference type="EMBL" id="CM002239">
    <property type="protein sequence ID" value="EAA33550.1"/>
    <property type="molecule type" value="Genomic_DNA"/>
</dbReference>
<dbReference type="PIR" id="A30775">
    <property type="entry name" value="A30775"/>
</dbReference>
<dbReference type="PDB" id="6ZLM">
    <property type="method" value="EM"/>
    <property type="resolution" value="4.30 A"/>
    <property type="chains" value="A/AA/AB/B/BA/C/CA/CB/D/DB/E/EA/EB/F/FA/FB/G/GA/GB/H/HA/I/IA/IB/J/JB/KA/KB/L/LA=1-458"/>
</dbReference>
<dbReference type="PDB" id="6ZLO">
    <property type="method" value="EM"/>
    <property type="resolution" value="2.90 A"/>
    <property type="chains" value="A/AA/AB/B/BA/BB/C/CA/CB/D/DA/DB/E/EA/EB/F/FA/FB/G/GA/GB/H/HA/HB/I/IA/IB/J/JA/K=227-458"/>
</dbReference>
<dbReference type="PDB" id="7R5M">
    <property type="method" value="EM"/>
    <property type="resolution" value="3.30 A"/>
    <property type="chains" value="A/B/G/H/K/L=225-458"/>
</dbReference>
<dbReference type="PDB" id="8OHS">
    <property type="method" value="EM"/>
    <property type="resolution" value="4.10 A"/>
    <property type="chains" value="A/B/D/F/G/I=1-458"/>
</dbReference>
<dbReference type="PDBsum" id="6ZLM"/>
<dbReference type="PDBsum" id="6ZLO"/>
<dbReference type="PDBsum" id="7R5M"/>
<dbReference type="PDBsum" id="8OHS"/>
<dbReference type="EMDB" id="EMD-11268"/>
<dbReference type="EMDB" id="EMD-11270"/>
<dbReference type="EMDB" id="EMD-14331"/>
<dbReference type="EMDB" id="EMD-16884"/>
<dbReference type="SMR" id="P20285"/>
<dbReference type="FunCoup" id="P20285">
    <property type="interactions" value="1043"/>
</dbReference>
<dbReference type="STRING" id="367110.P20285"/>
<dbReference type="PaxDb" id="5141-EFNCRP00000007764"/>
<dbReference type="EnsemblFungi" id="EAA33550">
    <property type="protein sequence ID" value="EAA33550"/>
    <property type="gene ID" value="NCU07659"/>
</dbReference>
<dbReference type="KEGG" id="ncr:NCU07659"/>
<dbReference type="VEuPathDB" id="FungiDB:NCU07659"/>
<dbReference type="HOGENOM" id="CLU_016733_10_2_1"/>
<dbReference type="InParanoid" id="P20285"/>
<dbReference type="OMA" id="TMEFESF"/>
<dbReference type="OrthoDB" id="537444at2759"/>
<dbReference type="Proteomes" id="UP000001805">
    <property type="component" value="Chromosome 4, Linkage Group IV"/>
</dbReference>
<dbReference type="GO" id="GO:0005759">
    <property type="term" value="C:mitochondrial matrix"/>
    <property type="evidence" value="ECO:0007669"/>
    <property type="project" value="UniProtKB-SubCell"/>
</dbReference>
<dbReference type="GO" id="GO:0045254">
    <property type="term" value="C:pyruvate dehydrogenase complex"/>
    <property type="evidence" value="ECO:0000318"/>
    <property type="project" value="GO_Central"/>
</dbReference>
<dbReference type="GO" id="GO:0004742">
    <property type="term" value="F:dihydrolipoyllysine-residue acetyltransferase activity"/>
    <property type="evidence" value="ECO:0000318"/>
    <property type="project" value="GO_Central"/>
</dbReference>
<dbReference type="GO" id="GO:0006086">
    <property type="term" value="P:pyruvate decarboxylation to acetyl-CoA"/>
    <property type="evidence" value="ECO:0000318"/>
    <property type="project" value="GO_Central"/>
</dbReference>
<dbReference type="CDD" id="cd06849">
    <property type="entry name" value="lipoyl_domain"/>
    <property type="match status" value="1"/>
</dbReference>
<dbReference type="FunFam" id="2.40.50.100:FF:000010">
    <property type="entry name" value="Acetyltransferase component of pyruvate dehydrogenase complex"/>
    <property type="match status" value="1"/>
</dbReference>
<dbReference type="FunFam" id="3.30.559.10:FF:000003">
    <property type="entry name" value="Acetyltransferase component of pyruvate dehydrogenase complex"/>
    <property type="match status" value="1"/>
</dbReference>
<dbReference type="Gene3D" id="2.40.50.100">
    <property type="match status" value="1"/>
</dbReference>
<dbReference type="Gene3D" id="3.30.559.10">
    <property type="entry name" value="Chloramphenicol acetyltransferase-like domain"/>
    <property type="match status" value="1"/>
</dbReference>
<dbReference type="Gene3D" id="4.10.320.10">
    <property type="entry name" value="E3-binding domain"/>
    <property type="match status" value="1"/>
</dbReference>
<dbReference type="InterPro" id="IPR003016">
    <property type="entry name" value="2-oxoA_DH_lipoyl-BS"/>
</dbReference>
<dbReference type="InterPro" id="IPR001078">
    <property type="entry name" value="2-oxoacid_DH_actylTfrase"/>
</dbReference>
<dbReference type="InterPro" id="IPR000089">
    <property type="entry name" value="Biotin_lipoyl"/>
</dbReference>
<dbReference type="InterPro" id="IPR023213">
    <property type="entry name" value="CAT-like_dom_sf"/>
</dbReference>
<dbReference type="InterPro" id="IPR045257">
    <property type="entry name" value="E2/Pdx1"/>
</dbReference>
<dbReference type="InterPro" id="IPR036625">
    <property type="entry name" value="E3-bd_dom_sf"/>
</dbReference>
<dbReference type="InterPro" id="IPR006257">
    <property type="entry name" value="LAT1"/>
</dbReference>
<dbReference type="InterPro" id="IPR004167">
    <property type="entry name" value="PSBD"/>
</dbReference>
<dbReference type="InterPro" id="IPR011053">
    <property type="entry name" value="Single_hybrid_motif"/>
</dbReference>
<dbReference type="NCBIfam" id="TIGR01349">
    <property type="entry name" value="PDHac_trf_mito"/>
    <property type="match status" value="1"/>
</dbReference>
<dbReference type="PANTHER" id="PTHR23151">
    <property type="entry name" value="DIHYDROLIPOAMIDE ACETYL/SUCCINYL-TRANSFERASE-RELATED"/>
    <property type="match status" value="1"/>
</dbReference>
<dbReference type="PANTHER" id="PTHR23151:SF90">
    <property type="entry name" value="DIHYDROLIPOYLLYSINE-RESIDUE ACETYLTRANSFERASE COMPONENT OF PYRUVATE DEHYDROGENASE COMPLEX, MITOCHONDRIAL-RELATED"/>
    <property type="match status" value="1"/>
</dbReference>
<dbReference type="Pfam" id="PF00198">
    <property type="entry name" value="2-oxoacid_dh"/>
    <property type="match status" value="1"/>
</dbReference>
<dbReference type="Pfam" id="PF00364">
    <property type="entry name" value="Biotin_lipoyl"/>
    <property type="match status" value="1"/>
</dbReference>
<dbReference type="Pfam" id="PF02817">
    <property type="entry name" value="E3_binding"/>
    <property type="match status" value="1"/>
</dbReference>
<dbReference type="SUPFAM" id="SSF52777">
    <property type="entry name" value="CoA-dependent acyltransferases"/>
    <property type="match status" value="1"/>
</dbReference>
<dbReference type="SUPFAM" id="SSF47005">
    <property type="entry name" value="Peripheral subunit-binding domain of 2-oxo acid dehydrogenase complex"/>
    <property type="match status" value="1"/>
</dbReference>
<dbReference type="SUPFAM" id="SSF51230">
    <property type="entry name" value="Single hybrid motif"/>
    <property type="match status" value="1"/>
</dbReference>
<dbReference type="PROSITE" id="PS50968">
    <property type="entry name" value="BIOTINYL_LIPOYL"/>
    <property type="match status" value="1"/>
</dbReference>
<dbReference type="PROSITE" id="PS00189">
    <property type="entry name" value="LIPOYL"/>
    <property type="match status" value="1"/>
</dbReference>
<dbReference type="PROSITE" id="PS51826">
    <property type="entry name" value="PSBD"/>
    <property type="match status" value="1"/>
</dbReference>
<evidence type="ECO:0000250" key="1"/>
<evidence type="ECO:0000255" key="2"/>
<evidence type="ECO:0000255" key="3">
    <source>
        <dbReference type="PROSITE-ProRule" id="PRU01066"/>
    </source>
</evidence>
<evidence type="ECO:0000255" key="4">
    <source>
        <dbReference type="PROSITE-ProRule" id="PRU01170"/>
    </source>
</evidence>
<evidence type="ECO:0000256" key="5">
    <source>
        <dbReference type="SAM" id="MobiDB-lite"/>
    </source>
</evidence>
<evidence type="ECO:0000269" key="6">
    <source>
    </source>
</evidence>
<evidence type="ECO:0000305" key="7"/>
<evidence type="ECO:0000305" key="8">
    <source>
    </source>
</evidence>
<evidence type="ECO:0007829" key="9">
    <source>
        <dbReference type="PDB" id="7R5M"/>
    </source>
</evidence>
<sequence>MIVPVLSRQALRHASVARVALPSLTRWYASYPPHTVVKMPALSPTMTSGGIGAWQKKPGDKIEPGEVLVEIETDKAQMDFEFQEEGVLAKILKDSGEKDVAVGNPIAILVEEGTDVNAFKDFTLKDAGGETSPAVPKDEPKNESTASAPTPAPTPAPEPENTSFTGRFQTALEREPNALPAAKRLAREKGIDLRNVKGSGPGGKITEEDVKKALASAPAAGAAAAAYTDVPISGMRKTIAARLKESVTENPHFFVSTNLSVSKLLKLRQALNSSADGRYKLSVNDFLIKAMGIASKRVPTVNSSWRDGVIRQFETVDVSVAVATPNGLITPIVKGVEGKGLESISAAVKELAKKARDGKLKPEEYQGGSISISNMGMNPAVQSFTAIINPPQAAILAVGAPQKVAVPVENEDGTTGVSWDEQIIVTASFDHKVVDGAVGAEWIRELKKVIENPLELLL</sequence>